<protein>
    <recommendedName>
        <fullName evidence="8">Transmembrane channel-like protein 1</fullName>
    </recommendedName>
    <alternativeName>
        <fullName>Transmembrane cochlear-expressed protein 1</fullName>
    </alternativeName>
</protein>
<organism>
    <name type="scientific">Homo sapiens</name>
    <name type="common">Human</name>
    <dbReference type="NCBI Taxonomy" id="9606"/>
    <lineage>
        <taxon>Eukaryota</taxon>
        <taxon>Metazoa</taxon>
        <taxon>Chordata</taxon>
        <taxon>Craniata</taxon>
        <taxon>Vertebrata</taxon>
        <taxon>Euteleostomi</taxon>
        <taxon>Mammalia</taxon>
        <taxon>Eutheria</taxon>
        <taxon>Euarchontoglires</taxon>
        <taxon>Primates</taxon>
        <taxon>Haplorrhini</taxon>
        <taxon>Catarrhini</taxon>
        <taxon>Hominidae</taxon>
        <taxon>Homo</taxon>
    </lineage>
</organism>
<comment type="function">
    <text evidence="2">Pore-forming subunit of the mechanotransducer (MET) non-selective cation channel complex located at the tips of stereocilia of cochlear hair cells and that mediates sensory transduction in the auditory system (By similarity). The MET complex is composed of two dimeric pore-forming ion-conducting transmembrane TMC (TMC1 or TMC2) subunits, and aided by several auxiliary proteins including LHFPL5, TMIE, CIB2/3 and TOMT, and the tip-link PCDH15 (By similarity). MET channel is activated by tension in the tip-link extending from the side wall of one stereocilium to the tip of the adjacent shorter stereocilium, where the channel is located (By similarity). TMC1 MET channel is highly permeable to calcium and likely transports monovalent cations (By similarity). Also involved in vestibular hair cells transduction current (By similarity).</text>
</comment>
<comment type="catalytic activity">
    <reaction evidence="2">
        <text>Ca(2+)(in) = Ca(2+)(out)</text>
        <dbReference type="Rhea" id="RHEA:29671"/>
        <dbReference type="ChEBI" id="CHEBI:29108"/>
    </reaction>
</comment>
<comment type="subunit">
    <text evidence="2 6 7">Forms the MET channel complosed of TMC dimer (TMC1 or TMC2), TMIE, TOMT, CIB (CIB2 or CIB3), LHFPL5 and PDH15 (PubMed:30138589, PubMed:34089643). The interaction of TMC1 and TMC2 with TOMT is required for the transportation of TMC1/2 into the stereocilia of hair cells. Interacts (via N-terminus) with both isoforms CD1 and CD3 of PCDH15 (By similarity). Can form a heterodimer with TMC2, TMC5 or TMC7 (By similarity).</text>
</comment>
<comment type="subcellular location">
    <subcellularLocation>
        <location evidence="2">Cell membrane</location>
        <topology evidence="9">Multi-pass membrane protein</topology>
    </subcellularLocation>
    <text evidence="2">Localized to the stereocilia tips of the cochlear hair cells.</text>
</comment>
<comment type="tissue specificity">
    <text>Detected in fetal cochlea, and at low levels in placenta and testis.</text>
</comment>
<comment type="domain">
    <text evidence="6">TMC1 is structurally similar to TMEM16 channel and may include ten transmembrane (TM) domains with the ion-conducting pore placed between TM4 and TM7.</text>
</comment>
<comment type="disease" evidence="4 5">
    <disease id="DI-00850">
        <name>Deafness, autosomal dominant, 36</name>
        <acronym>DFNA36</acronym>
        <description>A form of non-syndromic sensorineural hearing loss. Sensorineural deafness results from damage to the neural receptors of the inner ear, the nerve pathways to the brain, or the area of the brain that receives sound information. DFNA36 is a bilateral hearing loss, and begins at 5-10 years of age. It progresses to profound deafness within 10-15 years.</description>
        <dbReference type="MIM" id="606705"/>
    </disease>
    <text>The disease is caused by variants affecting the gene represented in this entry.</text>
</comment>
<comment type="disease" evidence="4">
    <disease id="DI-00858">
        <name>Deafness, autosomal recessive, 7</name>
        <acronym>DFNB7</acronym>
        <description>A form of non-syndromic sensorineural hearing loss. Sensorineural deafness results from damage to the neural receptors of the inner ear, the nerve pathways to the brain, or the area of the brain that receives sound information.</description>
        <dbReference type="MIM" id="600974"/>
    </disease>
    <text>The disease is caused by variants affecting the gene represented in this entry.</text>
</comment>
<comment type="similarity">
    <text evidence="9">Belongs to the TMC family.</text>
</comment>
<comment type="sequence caution" evidence="9">
    <conflict type="erroneous termination">
        <sequence resource="EMBL-CDS" id="BAC05351"/>
    </conflict>
    <text>Truncated C-terminus.</text>
</comment>
<comment type="sequence caution" evidence="9">
    <conflict type="frameshift">
        <sequence resource="EMBL-CDS" id="BAC05351"/>
    </conflict>
</comment>
<proteinExistence type="evidence at protein level"/>
<sequence length="760" mass="87768">MSPKKVQIKVEEKEDETEESSSEEEEEVEDKLPRRESLRPKRKRTRDVINEDDPEPEPEDEETRKAREKERRRRLKRGAEEEEIDEEELERLKAELDEKRQIIATVKCKPWKMEKKIEVLKEAKKFVSENEGALGKGKGKRWFAFKMMMAKKWAKFLRDFENFKAACVPWENKIKAIESQFGSSVASYFLFLRWMYGVNMVLFILTFSLIMLPEYLWGLPYGSLPRKTVPRAEEASAANFGVLYDFNGLAQYSVLFYGYYDNKRTIGWMNFRLPLSYFLVGIMCIGYSFLVVLKAMTKNIGDDGGGDDNTFNFSWKVFTSWDYLIGNPETADNKFNSITMNFKEAITEEKAAQVEENVHLIRFLRFLANFFVFLTLGGSGYLIFWAVKRSQEFAQQDPDTLGWWEKNEMNMVMSLLGMFCPTLFDLFAELEDYHPLIALKWLLGRIFALLLGNLYVFILALMDEINNKIEEEKLVKANITLWEANMIKAYNASFSENSTGPPFFVHPADVPRGPCWETMVGQEFVRLTVSDVLTTYVTILIGDFLRACFVRFCNYCWCWDLEYGYPSYTEFDISGNVLALIFNQGMIWMGSFFAPSLPGINILRLHTSMYFQCWAVMCCNVPEARVFKASRSNNFYLGMLLLILFLSTMPVLYMIVSLPPSFDCGPFSGKNRMFEVIGETLEHDFPSWMAKILRQLSNPGLVIAVILVMVLAIYYLNATAKGQKAANLDLKKKMKMQALENKMRNKKMAAARAAAAAGRQ</sequence>
<dbReference type="EMBL" id="AF417578">
    <property type="protein sequence ID" value="AAL86399.1"/>
    <property type="molecule type" value="mRNA"/>
</dbReference>
<dbReference type="EMBL" id="AL591662">
    <property type="status" value="NOT_ANNOTATED_CDS"/>
    <property type="molecule type" value="Genomic_DNA"/>
</dbReference>
<dbReference type="EMBL" id="AL162416">
    <property type="status" value="NOT_ANNOTATED_CDS"/>
    <property type="molecule type" value="Genomic_DNA"/>
</dbReference>
<dbReference type="EMBL" id="AL590662">
    <property type="status" value="NOT_ANNOTATED_CDS"/>
    <property type="molecule type" value="Genomic_DNA"/>
</dbReference>
<dbReference type="EMBL" id="CH471089">
    <property type="protein sequence ID" value="EAW62541.1"/>
    <property type="molecule type" value="Genomic_DNA"/>
</dbReference>
<dbReference type="EMBL" id="AK098607">
    <property type="protein sequence ID" value="BAC05351.1"/>
    <property type="status" value="ALT_SEQ"/>
    <property type="molecule type" value="mRNA"/>
</dbReference>
<dbReference type="CCDS" id="CCDS6643.1"/>
<dbReference type="RefSeq" id="NP_619636.2">
    <property type="nucleotide sequence ID" value="NM_138691.2"/>
</dbReference>
<dbReference type="PDB" id="8XOQ">
    <property type="method" value="X-ray"/>
    <property type="resolution" value="2.41 A"/>
    <property type="chains" value="A/B=86-137"/>
</dbReference>
<dbReference type="PDBsum" id="8XOQ"/>
<dbReference type="SMR" id="Q8TDI8"/>
<dbReference type="BioGRID" id="125588">
    <property type="interactions" value="10"/>
</dbReference>
<dbReference type="FunCoup" id="Q8TDI8">
    <property type="interactions" value="95"/>
</dbReference>
<dbReference type="IntAct" id="Q8TDI8">
    <property type="interactions" value="8"/>
</dbReference>
<dbReference type="STRING" id="9606.ENSP00000494684"/>
<dbReference type="TCDB" id="1.A.17.4.15">
    <property type="family name" value="the calcium-dependent chloride channel (ca-clc) family"/>
</dbReference>
<dbReference type="iPTMnet" id="Q8TDI8"/>
<dbReference type="PhosphoSitePlus" id="Q8TDI8"/>
<dbReference type="BioMuta" id="TMC1"/>
<dbReference type="DMDM" id="212286376"/>
<dbReference type="jPOST" id="Q8TDI8"/>
<dbReference type="MassIVE" id="Q8TDI8"/>
<dbReference type="PaxDb" id="9606-ENSP00000297784"/>
<dbReference type="PeptideAtlas" id="Q8TDI8"/>
<dbReference type="ProteomicsDB" id="74293"/>
<dbReference type="Antibodypedia" id="27012">
    <property type="antibodies" value="68 antibodies from 13 providers"/>
</dbReference>
<dbReference type="DNASU" id="117531"/>
<dbReference type="Ensembl" id="ENST00000297784.10">
    <property type="protein sequence ID" value="ENSP00000297784.6"/>
    <property type="gene ID" value="ENSG00000165091.18"/>
</dbReference>
<dbReference type="Ensembl" id="ENST00000340019.4">
    <property type="protein sequence ID" value="ENSP00000341433.3"/>
    <property type="gene ID" value="ENSG00000165091.18"/>
</dbReference>
<dbReference type="Ensembl" id="ENST00000645208.2">
    <property type="protein sequence ID" value="ENSP00000494684.1"/>
    <property type="gene ID" value="ENSG00000165091.18"/>
</dbReference>
<dbReference type="GeneID" id="117531"/>
<dbReference type="KEGG" id="hsa:117531"/>
<dbReference type="MANE-Select" id="ENST00000297784.10">
    <property type="protein sequence ID" value="ENSP00000297784.6"/>
    <property type="RefSeq nucleotide sequence ID" value="NM_138691.3"/>
    <property type="RefSeq protein sequence ID" value="NP_619636.2"/>
</dbReference>
<dbReference type="UCSC" id="uc004aiz.1">
    <property type="organism name" value="human"/>
</dbReference>
<dbReference type="AGR" id="HGNC:16513"/>
<dbReference type="CTD" id="117531"/>
<dbReference type="DisGeNET" id="117531"/>
<dbReference type="GeneCards" id="TMC1"/>
<dbReference type="GeneReviews" id="TMC1"/>
<dbReference type="HGNC" id="HGNC:16513">
    <property type="gene designation" value="TMC1"/>
</dbReference>
<dbReference type="HPA" id="ENSG00000165091">
    <property type="expression patterns" value="Tissue enhanced (cervix)"/>
</dbReference>
<dbReference type="MalaCards" id="TMC1"/>
<dbReference type="MIM" id="600974">
    <property type="type" value="phenotype"/>
</dbReference>
<dbReference type="MIM" id="606705">
    <property type="type" value="phenotype"/>
</dbReference>
<dbReference type="MIM" id="606706">
    <property type="type" value="gene"/>
</dbReference>
<dbReference type="neXtProt" id="NX_Q8TDI8"/>
<dbReference type="OpenTargets" id="ENSG00000165091"/>
<dbReference type="Orphanet" id="90635">
    <property type="disease" value="Rare autosomal dominant non-syndromic sensorineural deafness type DFNA"/>
</dbReference>
<dbReference type="Orphanet" id="90636">
    <property type="disease" value="Rare autosomal recessive non-syndromic sensorineural deafness type DFNB"/>
</dbReference>
<dbReference type="PharmGKB" id="PA38156"/>
<dbReference type="VEuPathDB" id="HostDB:ENSG00000165091"/>
<dbReference type="eggNOG" id="ENOG502QQGX">
    <property type="taxonomic scope" value="Eukaryota"/>
</dbReference>
<dbReference type="GeneTree" id="ENSGT01050000244942"/>
<dbReference type="HOGENOM" id="CLU_013958_2_1_1"/>
<dbReference type="InParanoid" id="Q8TDI8"/>
<dbReference type="OMA" id="NFFALCT"/>
<dbReference type="OrthoDB" id="5831905at2759"/>
<dbReference type="PAN-GO" id="Q8TDI8">
    <property type="GO annotations" value="4 GO annotations based on evolutionary models"/>
</dbReference>
<dbReference type="PhylomeDB" id="Q8TDI8"/>
<dbReference type="TreeFam" id="TF313462"/>
<dbReference type="PathwayCommons" id="Q8TDI8"/>
<dbReference type="Reactome" id="R-HSA-9662360">
    <property type="pathway name" value="Sensory processing of sound by inner hair cells of the cochlea"/>
</dbReference>
<dbReference type="Reactome" id="R-HSA-9662361">
    <property type="pathway name" value="Sensory processing of sound by outer hair cells of the cochlea"/>
</dbReference>
<dbReference type="SignaLink" id="Q8TDI8"/>
<dbReference type="SIGNOR" id="Q8TDI8"/>
<dbReference type="BioGRID-ORCS" id="117531">
    <property type="hits" value="7 hits in 1136 CRISPR screens"/>
</dbReference>
<dbReference type="ChiTaRS" id="TMC1">
    <property type="organism name" value="human"/>
</dbReference>
<dbReference type="GeneWiki" id="TMC1"/>
<dbReference type="GenomeRNAi" id="117531"/>
<dbReference type="Pharos" id="Q8TDI8">
    <property type="development level" value="Tbio"/>
</dbReference>
<dbReference type="PRO" id="PR:Q8TDI8"/>
<dbReference type="Proteomes" id="UP000005640">
    <property type="component" value="Chromosome 9"/>
</dbReference>
<dbReference type="RNAct" id="Q8TDI8">
    <property type="molecule type" value="protein"/>
</dbReference>
<dbReference type="Bgee" id="ENSG00000165091">
    <property type="expression patterns" value="Expressed in male germ line stem cell (sensu Vertebrata) in testis and 96 other cell types or tissues"/>
</dbReference>
<dbReference type="ExpressionAtlas" id="Q8TDI8">
    <property type="expression patterns" value="baseline and differential"/>
</dbReference>
<dbReference type="GO" id="GO:0009897">
    <property type="term" value="C:external side of plasma membrane"/>
    <property type="evidence" value="ECO:0007669"/>
    <property type="project" value="Ensembl"/>
</dbReference>
<dbReference type="GO" id="GO:0032420">
    <property type="term" value="C:stereocilium"/>
    <property type="evidence" value="ECO:0000250"/>
    <property type="project" value="UniProtKB"/>
</dbReference>
<dbReference type="GO" id="GO:0032426">
    <property type="term" value="C:stereocilium tip"/>
    <property type="evidence" value="ECO:0007669"/>
    <property type="project" value="Ensembl"/>
</dbReference>
<dbReference type="GO" id="GO:0005262">
    <property type="term" value="F:calcium channel activity"/>
    <property type="evidence" value="ECO:0000250"/>
    <property type="project" value="UniProtKB"/>
</dbReference>
<dbReference type="GO" id="GO:0008381">
    <property type="term" value="F:mechanosensitive monoatomic ion channel activity"/>
    <property type="evidence" value="ECO:0000250"/>
    <property type="project" value="UniProtKB"/>
</dbReference>
<dbReference type="GO" id="GO:0005245">
    <property type="term" value="F:voltage-gated calcium channel activity"/>
    <property type="evidence" value="ECO:0000318"/>
    <property type="project" value="GO_Central"/>
</dbReference>
<dbReference type="GO" id="GO:0060117">
    <property type="term" value="P:auditory receptor cell development"/>
    <property type="evidence" value="ECO:0007669"/>
    <property type="project" value="Ensembl"/>
</dbReference>
<dbReference type="GO" id="GO:0050910">
    <property type="term" value="P:detection of mechanical stimulus involved in sensory perception of sound"/>
    <property type="evidence" value="ECO:0000318"/>
    <property type="project" value="GO_Central"/>
</dbReference>
<dbReference type="GO" id="GO:1903169">
    <property type="term" value="P:regulation of calcium ion transmembrane transport"/>
    <property type="evidence" value="ECO:0007669"/>
    <property type="project" value="Ensembl"/>
</dbReference>
<dbReference type="GO" id="GO:0060005">
    <property type="term" value="P:vestibular reflex"/>
    <property type="evidence" value="ECO:0000318"/>
    <property type="project" value="GO_Central"/>
</dbReference>
<dbReference type="InterPro" id="IPR038900">
    <property type="entry name" value="TMC"/>
</dbReference>
<dbReference type="InterPro" id="IPR012496">
    <property type="entry name" value="TMC_dom"/>
</dbReference>
<dbReference type="PANTHER" id="PTHR23302:SF18">
    <property type="entry name" value="TRANSMEMBRANE CHANNEL-LIKE PROTEIN 1"/>
    <property type="match status" value="1"/>
</dbReference>
<dbReference type="PANTHER" id="PTHR23302">
    <property type="entry name" value="TRANSMEMBRANE CHANNEL-RELATED"/>
    <property type="match status" value="1"/>
</dbReference>
<dbReference type="Pfam" id="PF07810">
    <property type="entry name" value="TMC"/>
    <property type="match status" value="1"/>
</dbReference>
<reference key="1">
    <citation type="journal article" date="2002" name="Nat. Genet.">
        <title>Dominant and recessive deafness caused by mutations of a novel gene, TMC1, required for cochlear hair-cell function.</title>
        <authorList>
            <person name="Kurima K."/>
            <person name="Peters L.M."/>
            <person name="Yang Y."/>
            <person name="Riazuddin S."/>
            <person name="Ahmed Z.M."/>
            <person name="Naz S."/>
            <person name="Arnaud D."/>
            <person name="Drury S."/>
            <person name="Mo J."/>
            <person name="Makishima T."/>
            <person name="Ghosh M."/>
            <person name="Menon P.S.N."/>
            <person name="Deshmukh D."/>
            <person name="Oddoux C."/>
            <person name="Ostrer H."/>
            <person name="Khan S."/>
            <person name="Raizuddin S."/>
            <person name="Deininger P.L."/>
            <person name="Hampton L.L."/>
            <person name="Sullivan S.L."/>
            <person name="Battey J.F."/>
            <person name="Keats B.J.B."/>
            <person name="Wilcox E.R."/>
            <person name="Friedman T.B."/>
            <person name="Griffith A.J."/>
        </authorList>
    </citation>
    <scope>NUCLEOTIDE SEQUENCE [MRNA]</scope>
    <scope>VARIANT LYS-81</scope>
    <scope>VARIANT DFNA36 ASN-572</scope>
    <scope>VARIANT DFNB7 VAL-654</scope>
    <source>
        <tissue>Fetal brain</tissue>
    </source>
</reference>
<reference key="2">
    <citation type="journal article" date="2004" name="Nature">
        <title>DNA sequence and analysis of human chromosome 9.</title>
        <authorList>
            <person name="Humphray S.J."/>
            <person name="Oliver K."/>
            <person name="Hunt A.R."/>
            <person name="Plumb R.W."/>
            <person name="Loveland J.E."/>
            <person name="Howe K.L."/>
            <person name="Andrews T.D."/>
            <person name="Searle S."/>
            <person name="Hunt S.E."/>
            <person name="Scott C.E."/>
            <person name="Jones M.C."/>
            <person name="Ainscough R."/>
            <person name="Almeida J.P."/>
            <person name="Ambrose K.D."/>
            <person name="Ashwell R.I.S."/>
            <person name="Babbage A.K."/>
            <person name="Babbage S."/>
            <person name="Bagguley C.L."/>
            <person name="Bailey J."/>
            <person name="Banerjee R."/>
            <person name="Barker D.J."/>
            <person name="Barlow K.F."/>
            <person name="Bates K."/>
            <person name="Beasley H."/>
            <person name="Beasley O."/>
            <person name="Bird C.P."/>
            <person name="Bray-Allen S."/>
            <person name="Brown A.J."/>
            <person name="Brown J.Y."/>
            <person name="Burford D."/>
            <person name="Burrill W."/>
            <person name="Burton J."/>
            <person name="Carder C."/>
            <person name="Carter N.P."/>
            <person name="Chapman J.C."/>
            <person name="Chen Y."/>
            <person name="Clarke G."/>
            <person name="Clark S.Y."/>
            <person name="Clee C.M."/>
            <person name="Clegg S."/>
            <person name="Collier R.E."/>
            <person name="Corby N."/>
            <person name="Crosier M."/>
            <person name="Cummings A.T."/>
            <person name="Davies J."/>
            <person name="Dhami P."/>
            <person name="Dunn M."/>
            <person name="Dutta I."/>
            <person name="Dyer L.W."/>
            <person name="Earthrowl M.E."/>
            <person name="Faulkner L."/>
            <person name="Fleming C.J."/>
            <person name="Frankish A."/>
            <person name="Frankland J.A."/>
            <person name="French L."/>
            <person name="Fricker D.G."/>
            <person name="Garner P."/>
            <person name="Garnett J."/>
            <person name="Ghori J."/>
            <person name="Gilbert J.G.R."/>
            <person name="Glison C."/>
            <person name="Grafham D.V."/>
            <person name="Gribble S."/>
            <person name="Griffiths C."/>
            <person name="Griffiths-Jones S."/>
            <person name="Grocock R."/>
            <person name="Guy J."/>
            <person name="Hall R.E."/>
            <person name="Hammond S."/>
            <person name="Harley J.L."/>
            <person name="Harrison E.S.I."/>
            <person name="Hart E.A."/>
            <person name="Heath P.D."/>
            <person name="Henderson C.D."/>
            <person name="Hopkins B.L."/>
            <person name="Howard P.J."/>
            <person name="Howden P.J."/>
            <person name="Huckle E."/>
            <person name="Johnson C."/>
            <person name="Johnson D."/>
            <person name="Joy A.A."/>
            <person name="Kay M."/>
            <person name="Keenan S."/>
            <person name="Kershaw J.K."/>
            <person name="Kimberley A.M."/>
            <person name="King A."/>
            <person name="Knights A."/>
            <person name="Laird G.K."/>
            <person name="Langford C."/>
            <person name="Lawlor S."/>
            <person name="Leongamornlert D.A."/>
            <person name="Leversha M."/>
            <person name="Lloyd C."/>
            <person name="Lloyd D.M."/>
            <person name="Lovell J."/>
            <person name="Martin S."/>
            <person name="Mashreghi-Mohammadi M."/>
            <person name="Matthews L."/>
            <person name="McLaren S."/>
            <person name="McLay K.E."/>
            <person name="McMurray A."/>
            <person name="Milne S."/>
            <person name="Nickerson T."/>
            <person name="Nisbett J."/>
            <person name="Nordsiek G."/>
            <person name="Pearce A.V."/>
            <person name="Peck A.I."/>
            <person name="Porter K.M."/>
            <person name="Pandian R."/>
            <person name="Pelan S."/>
            <person name="Phillimore B."/>
            <person name="Povey S."/>
            <person name="Ramsey Y."/>
            <person name="Rand V."/>
            <person name="Scharfe M."/>
            <person name="Sehra H.K."/>
            <person name="Shownkeen R."/>
            <person name="Sims S.K."/>
            <person name="Skuce C.D."/>
            <person name="Smith M."/>
            <person name="Steward C.A."/>
            <person name="Swarbreck D."/>
            <person name="Sycamore N."/>
            <person name="Tester J."/>
            <person name="Thorpe A."/>
            <person name="Tracey A."/>
            <person name="Tromans A."/>
            <person name="Thomas D.W."/>
            <person name="Wall M."/>
            <person name="Wallis J.M."/>
            <person name="West A.P."/>
            <person name="Whitehead S.L."/>
            <person name="Willey D.L."/>
            <person name="Williams S.A."/>
            <person name="Wilming L."/>
            <person name="Wray P.W."/>
            <person name="Young L."/>
            <person name="Ashurst J.L."/>
            <person name="Coulson A."/>
            <person name="Blocker H."/>
            <person name="Durbin R.M."/>
            <person name="Sulston J.E."/>
            <person name="Hubbard T."/>
            <person name="Jackson M.J."/>
            <person name="Bentley D.R."/>
            <person name="Beck S."/>
            <person name="Rogers J."/>
            <person name="Dunham I."/>
        </authorList>
    </citation>
    <scope>NUCLEOTIDE SEQUENCE [LARGE SCALE GENOMIC DNA]</scope>
</reference>
<reference key="3">
    <citation type="submission" date="2005-07" db="EMBL/GenBank/DDBJ databases">
        <authorList>
            <person name="Mural R.J."/>
            <person name="Istrail S."/>
            <person name="Sutton G.G."/>
            <person name="Florea L."/>
            <person name="Halpern A.L."/>
            <person name="Mobarry C.M."/>
            <person name="Lippert R."/>
            <person name="Walenz B."/>
            <person name="Shatkay H."/>
            <person name="Dew I."/>
            <person name="Miller J.R."/>
            <person name="Flanigan M.J."/>
            <person name="Edwards N.J."/>
            <person name="Bolanos R."/>
            <person name="Fasulo D."/>
            <person name="Halldorsson B.V."/>
            <person name="Hannenhalli S."/>
            <person name="Turner R."/>
            <person name="Yooseph S."/>
            <person name="Lu F."/>
            <person name="Nusskern D.R."/>
            <person name="Shue B.C."/>
            <person name="Zheng X.H."/>
            <person name="Zhong F."/>
            <person name="Delcher A.L."/>
            <person name="Huson D.H."/>
            <person name="Kravitz S.A."/>
            <person name="Mouchard L."/>
            <person name="Reinert K."/>
            <person name="Remington K.A."/>
            <person name="Clark A.G."/>
            <person name="Waterman M.S."/>
            <person name="Eichler E.E."/>
            <person name="Adams M.D."/>
            <person name="Hunkapiller M.W."/>
            <person name="Myers E.W."/>
            <person name="Venter J.C."/>
        </authorList>
    </citation>
    <scope>NUCLEOTIDE SEQUENCE [LARGE SCALE GENOMIC DNA]</scope>
</reference>
<reference key="4">
    <citation type="journal article" date="2004" name="Nat. Genet.">
        <title>Complete sequencing and characterization of 21,243 full-length human cDNAs.</title>
        <authorList>
            <person name="Ota T."/>
            <person name="Suzuki Y."/>
            <person name="Nishikawa T."/>
            <person name="Otsuki T."/>
            <person name="Sugiyama T."/>
            <person name="Irie R."/>
            <person name="Wakamatsu A."/>
            <person name="Hayashi K."/>
            <person name="Sato H."/>
            <person name="Nagai K."/>
            <person name="Kimura K."/>
            <person name="Makita H."/>
            <person name="Sekine M."/>
            <person name="Obayashi M."/>
            <person name="Nishi T."/>
            <person name="Shibahara T."/>
            <person name="Tanaka T."/>
            <person name="Ishii S."/>
            <person name="Yamamoto J."/>
            <person name="Saito K."/>
            <person name="Kawai Y."/>
            <person name="Isono Y."/>
            <person name="Nakamura Y."/>
            <person name="Nagahari K."/>
            <person name="Murakami K."/>
            <person name="Yasuda T."/>
            <person name="Iwayanagi T."/>
            <person name="Wagatsuma M."/>
            <person name="Shiratori A."/>
            <person name="Sudo H."/>
            <person name="Hosoiri T."/>
            <person name="Kaku Y."/>
            <person name="Kodaira H."/>
            <person name="Kondo H."/>
            <person name="Sugawara M."/>
            <person name="Takahashi M."/>
            <person name="Kanda K."/>
            <person name="Yokoi T."/>
            <person name="Furuya T."/>
            <person name="Kikkawa E."/>
            <person name="Omura Y."/>
            <person name="Abe K."/>
            <person name="Kamihara K."/>
            <person name="Katsuta N."/>
            <person name="Sato K."/>
            <person name="Tanikawa M."/>
            <person name="Yamazaki M."/>
            <person name="Ninomiya K."/>
            <person name="Ishibashi T."/>
            <person name="Yamashita H."/>
            <person name="Murakawa K."/>
            <person name="Fujimori K."/>
            <person name="Tanai H."/>
            <person name="Kimata M."/>
            <person name="Watanabe M."/>
            <person name="Hiraoka S."/>
            <person name="Chiba Y."/>
            <person name="Ishida S."/>
            <person name="Ono Y."/>
            <person name="Takiguchi S."/>
            <person name="Watanabe S."/>
            <person name="Yosida M."/>
            <person name="Hotuta T."/>
            <person name="Kusano J."/>
            <person name="Kanehori K."/>
            <person name="Takahashi-Fujii A."/>
            <person name="Hara H."/>
            <person name="Tanase T.-O."/>
            <person name="Nomura Y."/>
            <person name="Togiya S."/>
            <person name="Komai F."/>
            <person name="Hara R."/>
            <person name="Takeuchi K."/>
            <person name="Arita M."/>
            <person name="Imose N."/>
            <person name="Musashino K."/>
            <person name="Yuuki H."/>
            <person name="Oshima A."/>
            <person name="Sasaki N."/>
            <person name="Aotsuka S."/>
            <person name="Yoshikawa Y."/>
            <person name="Matsunawa H."/>
            <person name="Ichihara T."/>
            <person name="Shiohata N."/>
            <person name="Sano S."/>
            <person name="Moriya S."/>
            <person name="Momiyama H."/>
            <person name="Satoh N."/>
            <person name="Takami S."/>
            <person name="Terashima Y."/>
            <person name="Suzuki O."/>
            <person name="Nakagawa S."/>
            <person name="Senoh A."/>
            <person name="Mizoguchi H."/>
            <person name="Goto Y."/>
            <person name="Shimizu F."/>
            <person name="Wakebe H."/>
            <person name="Hishigaki H."/>
            <person name="Watanabe T."/>
            <person name="Sugiyama A."/>
            <person name="Takemoto M."/>
            <person name="Kawakami B."/>
            <person name="Yamazaki M."/>
            <person name="Watanabe K."/>
            <person name="Kumagai A."/>
            <person name="Itakura S."/>
            <person name="Fukuzumi Y."/>
            <person name="Fujimori Y."/>
            <person name="Komiyama M."/>
            <person name="Tashiro H."/>
            <person name="Tanigami A."/>
            <person name="Fujiwara T."/>
            <person name="Ono T."/>
            <person name="Yamada K."/>
            <person name="Fujii Y."/>
            <person name="Ozaki K."/>
            <person name="Hirao M."/>
            <person name="Ohmori Y."/>
            <person name="Kawabata A."/>
            <person name="Hikiji T."/>
            <person name="Kobatake N."/>
            <person name="Inagaki H."/>
            <person name="Ikema Y."/>
            <person name="Okamoto S."/>
            <person name="Okitani R."/>
            <person name="Kawakami T."/>
            <person name="Noguchi S."/>
            <person name="Itoh T."/>
            <person name="Shigeta K."/>
            <person name="Senba T."/>
            <person name="Matsumura K."/>
            <person name="Nakajima Y."/>
            <person name="Mizuno T."/>
            <person name="Morinaga M."/>
            <person name="Sasaki M."/>
            <person name="Togashi T."/>
            <person name="Oyama M."/>
            <person name="Hata H."/>
            <person name="Watanabe M."/>
            <person name="Komatsu T."/>
            <person name="Mizushima-Sugano J."/>
            <person name="Satoh T."/>
            <person name="Shirai Y."/>
            <person name="Takahashi Y."/>
            <person name="Nakagawa K."/>
            <person name="Okumura K."/>
            <person name="Nagase T."/>
            <person name="Nomura N."/>
            <person name="Kikuchi H."/>
            <person name="Masuho Y."/>
            <person name="Yamashita R."/>
            <person name="Nakai K."/>
            <person name="Yada T."/>
            <person name="Nakamura Y."/>
            <person name="Ohara O."/>
            <person name="Isogai T."/>
            <person name="Sugano S."/>
        </authorList>
    </citation>
    <scope>NUCLEOTIDE SEQUENCE [LARGE SCALE MRNA] OF 460-760</scope>
    <source>
        <tissue>Testis</tissue>
    </source>
</reference>
<reference key="5">
    <citation type="journal article" date="2018" name="Neuron">
        <title>TMC1 Forms the Pore of Mechanosensory Transduction Channels in Vertebrate Inner Ear Hair Cells.</title>
        <authorList>
            <person name="Pan B."/>
            <person name="Akyuz N."/>
            <person name="Liu X.P."/>
            <person name="Asai Y."/>
            <person name="Nist-Lund C."/>
            <person name="Kurima K."/>
            <person name="Derfler B.H."/>
            <person name="Gyoergy B."/>
            <person name="Limapichat W."/>
            <person name="Walujkar S."/>
            <person name="Wimalasena L.N."/>
            <person name="Sotomayor M."/>
            <person name="Corey D.P."/>
            <person name="Holt J.R."/>
        </authorList>
    </citation>
    <scope>HOMODIMER</scope>
    <scope>PHOSPHORYLATION AT SER-37; THR-45; SER-128; SER-314 AND THR-400</scope>
    <scope>DOMAIN</scope>
</reference>
<reference key="6">
    <citation type="journal article" date="2021" name="Neuron">
        <title>CIB2 and CIB3 are auxiliary subunits of the mechanotransduction channel of hair cells.</title>
        <authorList>
            <person name="Liang X."/>
            <person name="Qiu X."/>
            <person name="Dionne G."/>
            <person name="Cunningham C.L."/>
            <person name="Pucak M.L."/>
            <person name="Peng G."/>
            <person name="Kim Y.H."/>
            <person name="Lauer A."/>
            <person name="Shapiro L."/>
            <person name="Mueller U."/>
        </authorList>
    </citation>
    <scope>INTERACTION WITH CIB2</scope>
</reference>
<reference key="7">
    <citation type="journal article" date="2014" name="J. Transl. Med.">
        <title>Targeted genomic capture and massively parallel sequencing to identify novel variants causing Chinese hereditary hearing loss.</title>
        <authorList>
            <person name="Wei Q."/>
            <person name="Zhu H."/>
            <person name="Qian X."/>
            <person name="Chen Z."/>
            <person name="Yao J."/>
            <person name="Lu Y."/>
            <person name="Cao X."/>
            <person name="Xing G."/>
        </authorList>
    </citation>
    <scope>VARIANT DFNA36 ASN-572</scope>
</reference>
<gene>
    <name evidence="10" type="primary">TMC1</name>
</gene>
<evidence type="ECO:0000250" key="1">
    <source>
        <dbReference type="UniProtKB" id="D3KZG3"/>
    </source>
</evidence>
<evidence type="ECO:0000250" key="2">
    <source>
        <dbReference type="UniProtKB" id="Q8R4P5"/>
    </source>
</evidence>
<evidence type="ECO:0000256" key="3">
    <source>
        <dbReference type="SAM" id="MobiDB-lite"/>
    </source>
</evidence>
<evidence type="ECO:0000269" key="4">
    <source>
    </source>
</evidence>
<evidence type="ECO:0000269" key="5">
    <source>
    </source>
</evidence>
<evidence type="ECO:0000269" key="6">
    <source>
    </source>
</evidence>
<evidence type="ECO:0000269" key="7">
    <source>
    </source>
</evidence>
<evidence type="ECO:0000303" key="8">
    <source>
    </source>
</evidence>
<evidence type="ECO:0000305" key="9"/>
<evidence type="ECO:0000312" key="10">
    <source>
        <dbReference type="HGNC" id="HGNC:16513"/>
    </source>
</evidence>
<name>TMC1_HUMAN</name>
<accession>Q8TDI8</accession>
<accession>A8MVZ2</accession>
<accession>B1AM91</accession>
<keyword id="KW-0002">3D-structure</keyword>
<keyword id="KW-1003">Cell membrane</keyword>
<keyword id="KW-0209">Deafness</keyword>
<keyword id="KW-0225">Disease variant</keyword>
<keyword id="KW-1009">Hearing</keyword>
<keyword id="KW-0407">Ion channel</keyword>
<keyword id="KW-0406">Ion transport</keyword>
<keyword id="KW-0472">Membrane</keyword>
<keyword id="KW-1010">Non-syndromic deafness</keyword>
<keyword id="KW-0597">Phosphoprotein</keyword>
<keyword id="KW-1185">Reference proteome</keyword>
<keyword id="KW-0812">Transmembrane</keyword>
<keyword id="KW-1133">Transmembrane helix</keyword>
<keyword id="KW-0813">Transport</keyword>
<feature type="chain" id="PRO_0000185380" description="Transmembrane channel-like protein 1">
    <location>
        <begin position="1"/>
        <end position="760"/>
    </location>
</feature>
<feature type="topological domain" description="Cytoplasmic" evidence="9">
    <location>
        <begin position="1"/>
        <end position="182"/>
    </location>
</feature>
<feature type="transmembrane region" description="Helical" evidence="1">
    <location>
        <begin position="183"/>
        <end position="220"/>
    </location>
</feature>
<feature type="topological domain" description="Extracellular" evidence="9">
    <location>
        <begin position="221"/>
        <end position="271"/>
    </location>
</feature>
<feature type="transmembrane region" description="Helical" evidence="1">
    <location>
        <begin position="272"/>
        <end position="303"/>
    </location>
</feature>
<feature type="topological domain" description="Cytoplasmic" evidence="9">
    <location>
        <begin position="304"/>
        <end position="359"/>
    </location>
</feature>
<feature type="transmembrane region" description="Helical" evidence="1">
    <location>
        <begin position="360"/>
        <end position="390"/>
    </location>
</feature>
<feature type="topological domain" description="Extracellular" evidence="9">
    <location>
        <begin position="391"/>
        <end position="402"/>
    </location>
</feature>
<feature type="transmembrane region" description="Helical" evidence="1">
    <location>
        <begin position="403"/>
        <end position="430"/>
    </location>
</feature>
<feature type="topological domain" description="Cytoplasmic" evidence="9">
    <location>
        <begin position="431"/>
        <end position="434"/>
    </location>
</feature>
<feature type="transmembrane region" description="Helical" evidence="1">
    <location>
        <begin position="435"/>
        <end position="469"/>
    </location>
</feature>
<feature type="topological domain" description="Extracellular" evidence="9">
    <location>
        <begin position="470"/>
        <end position="515"/>
    </location>
</feature>
<feature type="transmembrane region" description="Helical" evidence="1">
    <location>
        <begin position="516"/>
        <end position="553"/>
    </location>
</feature>
<feature type="topological domain" description="Cytoplasmic" evidence="9">
    <location>
        <begin position="554"/>
        <end position="572"/>
    </location>
</feature>
<feature type="transmembrane region" description="Helical" evidence="1">
    <location>
        <begin position="573"/>
        <end position="593"/>
    </location>
</feature>
<feature type="topological domain" description="Extracellular" evidence="9">
    <location>
        <begin position="594"/>
        <end position="596"/>
    </location>
</feature>
<feature type="transmembrane region" description="Helical" evidence="1">
    <location>
        <begin position="597"/>
        <end position="619"/>
    </location>
</feature>
<feature type="topological domain" description="Cytoplasmic" evidence="9">
    <location>
        <begin position="620"/>
        <end position="633"/>
    </location>
</feature>
<feature type="transmembrane region" description="Helical" evidence="1">
    <location>
        <begin position="634"/>
        <end position="657"/>
    </location>
</feature>
<feature type="topological domain" description="Extracellular" evidence="9">
    <location>
        <begin position="658"/>
        <end position="700"/>
    </location>
</feature>
<feature type="transmembrane region" description="Helical" evidence="1">
    <location>
        <begin position="701"/>
        <end position="734"/>
    </location>
</feature>
<feature type="topological domain" description="Cytoplasmic" evidence="9">
    <location>
        <begin position="735"/>
        <end position="760"/>
    </location>
</feature>
<feature type="region of interest" description="Disordered" evidence="3">
    <location>
        <begin position="1"/>
        <end position="80"/>
    </location>
</feature>
<feature type="compositionally biased region" description="Acidic residues" evidence="3">
    <location>
        <begin position="13"/>
        <end position="29"/>
    </location>
</feature>
<feature type="compositionally biased region" description="Basic and acidic residues" evidence="3">
    <location>
        <begin position="30"/>
        <end position="39"/>
    </location>
</feature>
<feature type="compositionally biased region" description="Acidic residues" evidence="3">
    <location>
        <begin position="50"/>
        <end position="61"/>
    </location>
</feature>
<feature type="modified residue" description="Phosphoserine" evidence="6">
    <location>
        <position position="37"/>
    </location>
</feature>
<feature type="modified residue" description="Phosphothreonine" evidence="6">
    <location>
        <position position="45"/>
    </location>
</feature>
<feature type="modified residue" description="Phosphoserine" evidence="6">
    <location>
        <position position="128"/>
    </location>
</feature>
<feature type="modified residue" description="Phosphoserine" evidence="6">
    <location>
        <position position="314"/>
    </location>
</feature>
<feature type="modified residue" description="Phosphothreonine" evidence="6">
    <location>
        <position position="400"/>
    </location>
</feature>
<feature type="sequence variant" id="VAR_052333" description="In dbSNP:rs1796993." evidence="4">
    <original>E</original>
    <variation>K</variation>
    <location>
        <position position="81"/>
    </location>
</feature>
<feature type="sequence variant" id="VAR_052334" description="In dbSNP:rs11143384.">
    <original>R</original>
    <variation>W</variation>
    <location>
        <position position="141"/>
    </location>
</feature>
<feature type="sequence variant" id="VAR_052335" description="In dbSNP:rs17058153.">
    <original>M</original>
    <variation>T</variation>
    <location>
        <position position="486"/>
    </location>
</feature>
<feature type="sequence variant" id="VAR_014125" description="In DFNA36; dbSNP:rs121908072." evidence="4 5">
    <original>D</original>
    <variation>N</variation>
    <location>
        <position position="572"/>
    </location>
</feature>
<feature type="sequence variant" id="VAR_014126" description="In DFNB7; dbSNP:rs121908074." evidence="4">
    <original>M</original>
    <variation>V</variation>
    <location>
        <position position="654"/>
    </location>
</feature>
<feature type="sequence conflict" description="In Ref. 4; BAC05351." evidence="9" ref="4">
    <original>M</original>
    <variation>R</variation>
    <location>
        <position position="673"/>
    </location>
</feature>